<accession>Q7NJ40</accession>
<dbReference type="EMBL" id="BA000045">
    <property type="protein sequence ID" value="BAC89933.1"/>
    <property type="molecule type" value="Genomic_DNA"/>
</dbReference>
<dbReference type="RefSeq" id="NP_924938.1">
    <property type="nucleotide sequence ID" value="NC_005125.1"/>
</dbReference>
<dbReference type="RefSeq" id="WP_011141990.1">
    <property type="nucleotide sequence ID" value="NC_005125.1"/>
</dbReference>
<dbReference type="SMR" id="Q7NJ40"/>
<dbReference type="STRING" id="251221.gene:10759484"/>
<dbReference type="EnsemblBacteria" id="BAC89933">
    <property type="protein sequence ID" value="BAC89933"/>
    <property type="gene ID" value="BAC89933"/>
</dbReference>
<dbReference type="KEGG" id="gvi:glr1992"/>
<dbReference type="PATRIC" id="fig|251221.4.peg.2024"/>
<dbReference type="eggNOG" id="COG0850">
    <property type="taxonomic scope" value="Bacteria"/>
</dbReference>
<dbReference type="HOGENOM" id="CLU_048711_0_0_3"/>
<dbReference type="InParanoid" id="Q7NJ40"/>
<dbReference type="OrthoDB" id="9790810at2"/>
<dbReference type="PhylomeDB" id="Q7NJ40"/>
<dbReference type="Proteomes" id="UP000000557">
    <property type="component" value="Chromosome"/>
</dbReference>
<dbReference type="GO" id="GO:0000902">
    <property type="term" value="P:cell morphogenesis"/>
    <property type="evidence" value="ECO:0007669"/>
    <property type="project" value="InterPro"/>
</dbReference>
<dbReference type="GO" id="GO:0000917">
    <property type="term" value="P:division septum assembly"/>
    <property type="evidence" value="ECO:0007669"/>
    <property type="project" value="UniProtKB-KW"/>
</dbReference>
<dbReference type="GO" id="GO:1901891">
    <property type="term" value="P:regulation of cell septum assembly"/>
    <property type="evidence" value="ECO:0007669"/>
    <property type="project" value="InterPro"/>
</dbReference>
<dbReference type="Gene3D" id="2.160.20.70">
    <property type="match status" value="1"/>
</dbReference>
<dbReference type="Gene3D" id="3.30.160.540">
    <property type="match status" value="1"/>
</dbReference>
<dbReference type="HAMAP" id="MF_00267">
    <property type="entry name" value="MinC"/>
    <property type="match status" value="1"/>
</dbReference>
<dbReference type="InterPro" id="IPR016098">
    <property type="entry name" value="CAP/MinC_C"/>
</dbReference>
<dbReference type="InterPro" id="IPR013033">
    <property type="entry name" value="MinC"/>
</dbReference>
<dbReference type="InterPro" id="IPR036145">
    <property type="entry name" value="MinC_C_sf"/>
</dbReference>
<dbReference type="InterPro" id="IPR055219">
    <property type="entry name" value="MinC_N_1"/>
</dbReference>
<dbReference type="InterPro" id="IPR005526">
    <property type="entry name" value="Septum_form_inhib_MinC_C"/>
</dbReference>
<dbReference type="NCBIfam" id="TIGR01222">
    <property type="entry name" value="minC"/>
    <property type="match status" value="1"/>
</dbReference>
<dbReference type="NCBIfam" id="NF001778">
    <property type="entry name" value="PRK00513.2-4"/>
    <property type="match status" value="1"/>
</dbReference>
<dbReference type="PANTHER" id="PTHR34108">
    <property type="entry name" value="SEPTUM SITE-DETERMINING PROTEIN MINC"/>
    <property type="match status" value="1"/>
</dbReference>
<dbReference type="PANTHER" id="PTHR34108:SF1">
    <property type="entry name" value="SEPTUM SITE-DETERMINING PROTEIN MINC"/>
    <property type="match status" value="1"/>
</dbReference>
<dbReference type="Pfam" id="PF03775">
    <property type="entry name" value="MinC_C"/>
    <property type="match status" value="1"/>
</dbReference>
<dbReference type="Pfam" id="PF22642">
    <property type="entry name" value="MinC_N_1"/>
    <property type="match status" value="1"/>
</dbReference>
<dbReference type="SUPFAM" id="SSF63848">
    <property type="entry name" value="Cell-division inhibitor MinC, C-terminal domain"/>
    <property type="match status" value="1"/>
</dbReference>
<sequence>MYISNQIDPEWPRSTGCGPVGAISRATLICNLCALARSRPAMQTLPNSLPTQVTFKGTLEGLRLLIPVALPWEEVVLQLQHRLNAGERLWQGGAVVILEVGERLLDGPQLQAVTEMLTAQQLHLMRVRTVRRQTAVAAAVAGLSVEQQEAPPEENPDKPPALRGLAEPLYLQTTLRSGMSLVHPGTVIVVGDVNPGAEIVADGDILVWGTLRGVAHAGAHGNTRALIFALRLRPIQLRIADRVARASDEPPAAPQPEVAYIQDNTIHIAITTEFARRW</sequence>
<name>MINC_GLOVI</name>
<comment type="function">
    <text evidence="1">Cell division inhibitor that blocks the formation of polar Z ring septums. Rapidly oscillates between the poles of the cell to destabilize FtsZ filaments that have formed before they mature into polar Z rings. Prevents FtsZ polymerization.</text>
</comment>
<comment type="subunit">
    <text evidence="1">Interacts with MinD and FtsZ.</text>
</comment>
<comment type="similarity">
    <text evidence="1">Belongs to the MinC family.</text>
</comment>
<organism>
    <name type="scientific">Gloeobacter violaceus (strain ATCC 29082 / PCC 7421)</name>
    <dbReference type="NCBI Taxonomy" id="251221"/>
    <lineage>
        <taxon>Bacteria</taxon>
        <taxon>Bacillati</taxon>
        <taxon>Cyanobacteriota</taxon>
        <taxon>Cyanophyceae</taxon>
        <taxon>Gloeobacterales</taxon>
        <taxon>Gloeobacteraceae</taxon>
        <taxon>Gloeobacter</taxon>
    </lineage>
</organism>
<feature type="chain" id="PRO_0000189037" description="Probable septum site-determining protein MinC">
    <location>
        <begin position="1"/>
        <end position="278"/>
    </location>
</feature>
<proteinExistence type="inferred from homology"/>
<evidence type="ECO:0000255" key="1">
    <source>
        <dbReference type="HAMAP-Rule" id="MF_00267"/>
    </source>
</evidence>
<reference key="1">
    <citation type="journal article" date="2003" name="DNA Res.">
        <title>Complete genome structure of Gloeobacter violaceus PCC 7421, a cyanobacterium that lacks thylakoids.</title>
        <authorList>
            <person name="Nakamura Y."/>
            <person name="Kaneko T."/>
            <person name="Sato S."/>
            <person name="Mimuro M."/>
            <person name="Miyashita H."/>
            <person name="Tsuchiya T."/>
            <person name="Sasamoto S."/>
            <person name="Watanabe A."/>
            <person name="Kawashima K."/>
            <person name="Kishida Y."/>
            <person name="Kiyokawa C."/>
            <person name="Kohara M."/>
            <person name="Matsumoto M."/>
            <person name="Matsuno A."/>
            <person name="Nakazaki N."/>
            <person name="Shimpo S."/>
            <person name="Takeuchi C."/>
            <person name="Yamada M."/>
            <person name="Tabata S."/>
        </authorList>
    </citation>
    <scope>NUCLEOTIDE SEQUENCE [LARGE SCALE GENOMIC DNA]</scope>
    <source>
        <strain>ATCC 29082 / PCC 7421</strain>
    </source>
</reference>
<keyword id="KW-0131">Cell cycle</keyword>
<keyword id="KW-0132">Cell division</keyword>
<keyword id="KW-1185">Reference proteome</keyword>
<keyword id="KW-0717">Septation</keyword>
<gene>
    <name evidence="1" type="primary">minC</name>
    <name type="ordered locus">glr1992</name>
</gene>
<protein>
    <recommendedName>
        <fullName evidence="1">Probable septum site-determining protein MinC</fullName>
    </recommendedName>
</protein>